<feature type="chain" id="PRO_0000052387" description="K(+)/H(+) antiporter NhaP2">
    <location>
        <begin position="1"/>
        <end position="577"/>
    </location>
</feature>
<feature type="transmembrane region" description="Helical" evidence="1">
    <location>
        <begin position="3"/>
        <end position="23"/>
    </location>
</feature>
<feature type="transmembrane region" description="Helical" evidence="1">
    <location>
        <begin position="30"/>
        <end position="50"/>
    </location>
</feature>
<feature type="transmembrane region" description="Helical" evidence="1">
    <location>
        <begin position="58"/>
        <end position="78"/>
    </location>
</feature>
<feature type="transmembrane region" description="Helical" evidence="1">
    <location>
        <begin position="87"/>
        <end position="107"/>
    </location>
</feature>
<feature type="transmembrane region" description="Helical" evidence="1">
    <location>
        <begin position="109"/>
        <end position="129"/>
    </location>
</feature>
<feature type="transmembrane region" description="Helical" evidence="1">
    <location>
        <begin position="185"/>
        <end position="205"/>
    </location>
</feature>
<feature type="transmembrane region" description="Helical" evidence="1">
    <location>
        <begin position="221"/>
        <end position="241"/>
    </location>
</feature>
<feature type="transmembrane region" description="Helical" evidence="1">
    <location>
        <begin position="271"/>
        <end position="291"/>
    </location>
</feature>
<feature type="transmembrane region" description="Helical" evidence="1">
    <location>
        <begin position="293"/>
        <end position="313"/>
    </location>
</feature>
<feature type="transmembrane region" description="Helical" evidence="1">
    <location>
        <begin position="334"/>
        <end position="354"/>
    </location>
</feature>
<feature type="transmembrane region" description="Helical" evidence="1">
    <location>
        <begin position="363"/>
        <end position="383"/>
    </location>
</feature>
<feature type="domain" description="RCK C-terminal" evidence="1">
    <location>
        <begin position="403"/>
        <end position="485"/>
    </location>
</feature>
<sequence>MDAATIISLFILGSILVTSSILLSSFSSRLGIPILVIFLAIGMLAGVDGIGGIPFDNYPFAYMVSNLALAIILLDGGMRTQASSFRVALGPALSLATLGVLITSGLTGMMAAWLFHLDLIEGLLIGAIVGSTDAAAVFSLLGGKGLNERVGSTLEIESGSNDPMAVFLTITLIEMIQKHETGLDWMFAVHIIQQFGLGIVFGLGGGYLLQQMINRISLPSGLYPMLALSGGILIFALTTALEGSGILAVYLCGFLLGNRPIRNRYGILQNFDGLAWLAQIAMFLVLGLLVTPSDLWPIAVPALILSIWMIFFARPLSVFTGLLPFRGFNLRERIFISWVGLRGAVPIILAVFPMMAGLENARLFFNVAFFVVLVSLLLQGTSLSWAAKRAKVVVPPVGWPVSRVGLDIHPDNPWEQFIYQLSADKWCVGAALRDLHMPNETRIAALFRNNELFHPTGSTRLQEGDVLCVIGRERDLPALGKLFSQSPPVSLDQRFFGDFILEANAKFADVALIYGLEEGTEYRDKQQTLGEIIQQLLGAAPVVGDQVEFGGMIWTVAEKEDNVVRKIGVRVAEDEAE</sequence>
<accession>P65524</accession>
<accession>Q8XG61</accession>
<gene>
    <name evidence="1" type="primary">nhaP2</name>
    <name type="synonym">cvrA</name>
    <name type="ordered locus">STM1801</name>
</gene>
<keyword id="KW-0050">Antiport</keyword>
<keyword id="KW-0997">Cell inner membrane</keyword>
<keyword id="KW-1003">Cell membrane</keyword>
<keyword id="KW-0406">Ion transport</keyword>
<keyword id="KW-0472">Membrane</keyword>
<keyword id="KW-0630">Potassium</keyword>
<keyword id="KW-0633">Potassium transport</keyword>
<keyword id="KW-1185">Reference proteome</keyword>
<keyword id="KW-0812">Transmembrane</keyword>
<keyword id="KW-1133">Transmembrane helix</keyword>
<keyword id="KW-0813">Transport</keyword>
<name>NHAP2_SALTY</name>
<protein>
    <recommendedName>
        <fullName evidence="1">K(+)/H(+) antiporter NhaP2</fullName>
    </recommendedName>
    <alternativeName>
        <fullName evidence="1">Potassium/proton antiporter NhaP2</fullName>
    </alternativeName>
</protein>
<organism>
    <name type="scientific">Salmonella typhimurium (strain LT2 / SGSC1412 / ATCC 700720)</name>
    <dbReference type="NCBI Taxonomy" id="99287"/>
    <lineage>
        <taxon>Bacteria</taxon>
        <taxon>Pseudomonadati</taxon>
        <taxon>Pseudomonadota</taxon>
        <taxon>Gammaproteobacteria</taxon>
        <taxon>Enterobacterales</taxon>
        <taxon>Enterobacteriaceae</taxon>
        <taxon>Salmonella</taxon>
    </lineage>
</organism>
<reference key="1">
    <citation type="journal article" date="2001" name="Nature">
        <title>Complete genome sequence of Salmonella enterica serovar Typhimurium LT2.</title>
        <authorList>
            <person name="McClelland M."/>
            <person name="Sanderson K.E."/>
            <person name="Spieth J."/>
            <person name="Clifton S.W."/>
            <person name="Latreille P."/>
            <person name="Courtney L."/>
            <person name="Porwollik S."/>
            <person name="Ali J."/>
            <person name="Dante M."/>
            <person name="Du F."/>
            <person name="Hou S."/>
            <person name="Layman D."/>
            <person name="Leonard S."/>
            <person name="Nguyen C."/>
            <person name="Scott K."/>
            <person name="Holmes A."/>
            <person name="Grewal N."/>
            <person name="Mulvaney E."/>
            <person name="Ryan E."/>
            <person name="Sun H."/>
            <person name="Florea L."/>
            <person name="Miller W."/>
            <person name="Stoneking T."/>
            <person name="Nhan M."/>
            <person name="Waterston R."/>
            <person name="Wilson R.K."/>
        </authorList>
    </citation>
    <scope>NUCLEOTIDE SEQUENCE [LARGE SCALE GENOMIC DNA]</scope>
    <source>
        <strain>LT2 / SGSC1412 / ATCC 700720</strain>
    </source>
</reference>
<evidence type="ECO:0000255" key="1">
    <source>
        <dbReference type="HAMAP-Rule" id="MF_01075"/>
    </source>
</evidence>
<proteinExistence type="inferred from homology"/>
<dbReference type="EMBL" id="AE006468">
    <property type="protein sequence ID" value="AAL20716.1"/>
    <property type="molecule type" value="Genomic_DNA"/>
</dbReference>
<dbReference type="RefSeq" id="WP_000338376.1">
    <property type="nucleotide sequence ID" value="NC_003197.2"/>
</dbReference>
<dbReference type="SMR" id="P65524"/>
<dbReference type="STRING" id="99287.STM1801"/>
<dbReference type="PaxDb" id="99287-STM1801"/>
<dbReference type="KEGG" id="stm:STM1801"/>
<dbReference type="PATRIC" id="fig|99287.12.peg.1900"/>
<dbReference type="HOGENOM" id="CLU_005912_9_2_6"/>
<dbReference type="OMA" id="QIGMFVL"/>
<dbReference type="PhylomeDB" id="P65524"/>
<dbReference type="BioCyc" id="SENT99287:STM1801-MONOMER"/>
<dbReference type="Proteomes" id="UP000001014">
    <property type="component" value="Chromosome"/>
</dbReference>
<dbReference type="GO" id="GO:0005886">
    <property type="term" value="C:plasma membrane"/>
    <property type="evidence" value="ECO:0007669"/>
    <property type="project" value="UniProtKB-SubCell"/>
</dbReference>
<dbReference type="GO" id="GO:0050660">
    <property type="term" value="F:flavin adenine dinucleotide binding"/>
    <property type="evidence" value="ECO:0007669"/>
    <property type="project" value="InterPro"/>
</dbReference>
<dbReference type="GO" id="GO:0015386">
    <property type="term" value="F:potassium:proton antiporter activity"/>
    <property type="evidence" value="ECO:0000318"/>
    <property type="project" value="GO_Central"/>
</dbReference>
<dbReference type="GO" id="GO:0006884">
    <property type="term" value="P:cell volume homeostasis"/>
    <property type="evidence" value="ECO:0007669"/>
    <property type="project" value="InterPro"/>
</dbReference>
<dbReference type="GO" id="GO:0030007">
    <property type="term" value="P:intracellular potassium ion homeostasis"/>
    <property type="evidence" value="ECO:0000318"/>
    <property type="project" value="GO_Central"/>
</dbReference>
<dbReference type="FunFam" id="1.20.1530.20:FF:000002">
    <property type="entry name" value="K(+)/H(+) antiporter NhaP2"/>
    <property type="match status" value="1"/>
</dbReference>
<dbReference type="Gene3D" id="1.20.1530.20">
    <property type="match status" value="1"/>
</dbReference>
<dbReference type="Gene3D" id="3.30.465.10">
    <property type="match status" value="1"/>
</dbReference>
<dbReference type="Gene3D" id="3.30.70.1450">
    <property type="entry name" value="Regulator of K+ conductance, C-terminal domain"/>
    <property type="match status" value="1"/>
</dbReference>
<dbReference type="HAMAP" id="MF_01075">
    <property type="entry name" value="NhaP2"/>
    <property type="match status" value="1"/>
</dbReference>
<dbReference type="InterPro" id="IPR006153">
    <property type="entry name" value="Cation/H_exchanger_TM"/>
</dbReference>
<dbReference type="InterPro" id="IPR036318">
    <property type="entry name" value="FAD-bd_PCMH-like_sf"/>
</dbReference>
<dbReference type="InterPro" id="IPR016169">
    <property type="entry name" value="FAD-bd_PCMH_sub2"/>
</dbReference>
<dbReference type="InterPro" id="IPR038770">
    <property type="entry name" value="Na+/solute_symporter_sf"/>
</dbReference>
<dbReference type="InterPro" id="IPR023729">
    <property type="entry name" value="NhaP2"/>
</dbReference>
<dbReference type="InterPro" id="IPR006037">
    <property type="entry name" value="RCK_C"/>
</dbReference>
<dbReference type="InterPro" id="IPR036721">
    <property type="entry name" value="RCK_C_sf"/>
</dbReference>
<dbReference type="InterPro" id="IPR005170">
    <property type="entry name" value="Transptr-assoc_dom"/>
</dbReference>
<dbReference type="NCBIfam" id="NF003714">
    <property type="entry name" value="PRK05326.1-1"/>
    <property type="match status" value="1"/>
</dbReference>
<dbReference type="NCBIfam" id="NF003715">
    <property type="entry name" value="PRK05326.1-2"/>
    <property type="match status" value="1"/>
</dbReference>
<dbReference type="NCBIfam" id="NF003716">
    <property type="entry name" value="PRK05326.1-3"/>
    <property type="match status" value="1"/>
</dbReference>
<dbReference type="PANTHER" id="PTHR32507:SF7">
    <property type="entry name" value="K(+)_H(+) ANTIPORTER NHAP2"/>
    <property type="match status" value="1"/>
</dbReference>
<dbReference type="PANTHER" id="PTHR32507">
    <property type="entry name" value="NA(+)/H(+) ANTIPORTER 1"/>
    <property type="match status" value="1"/>
</dbReference>
<dbReference type="Pfam" id="PF03471">
    <property type="entry name" value="CorC_HlyC"/>
    <property type="match status" value="1"/>
</dbReference>
<dbReference type="Pfam" id="PF00999">
    <property type="entry name" value="Na_H_Exchanger"/>
    <property type="match status" value="1"/>
</dbReference>
<dbReference type="Pfam" id="PF02080">
    <property type="entry name" value="TrkA_C"/>
    <property type="match status" value="1"/>
</dbReference>
<dbReference type="SMART" id="SM01091">
    <property type="entry name" value="CorC_HlyC"/>
    <property type="match status" value="1"/>
</dbReference>
<dbReference type="SUPFAM" id="SSF56176">
    <property type="entry name" value="FAD-binding/transporter-associated domain-like"/>
    <property type="match status" value="1"/>
</dbReference>
<dbReference type="SUPFAM" id="SSF116726">
    <property type="entry name" value="TrkA C-terminal domain-like"/>
    <property type="match status" value="1"/>
</dbReference>
<dbReference type="PROSITE" id="PS51202">
    <property type="entry name" value="RCK_C"/>
    <property type="match status" value="1"/>
</dbReference>
<comment type="function">
    <text evidence="1">K(+)/H(+) antiporter that extrudes potassium in exchange for external protons and maintains the internal concentration of potassium under toxic levels.</text>
</comment>
<comment type="catalytic activity">
    <reaction evidence="1">
        <text>K(+)(in) + H(+)(out) = K(+)(out) + H(+)(in)</text>
        <dbReference type="Rhea" id="RHEA:29467"/>
        <dbReference type="ChEBI" id="CHEBI:15378"/>
        <dbReference type="ChEBI" id="CHEBI:29103"/>
    </reaction>
    <physiologicalReaction direction="left-to-right" evidence="1">
        <dbReference type="Rhea" id="RHEA:29468"/>
    </physiologicalReaction>
</comment>
<comment type="subcellular location">
    <subcellularLocation>
        <location evidence="1">Cell inner membrane</location>
        <topology evidence="1">Multi-pass membrane protein</topology>
    </subcellularLocation>
</comment>
<comment type="similarity">
    <text evidence="1">Belongs to the monovalent cation:proton antiporter 1 (CPA1) transporter (TC 2.A.36) family. NhaP2 subfamily.</text>
</comment>